<evidence type="ECO:0000255" key="1">
    <source>
        <dbReference type="HAMAP-Rule" id="MF_00564"/>
    </source>
</evidence>
<accession>Q4K3R6</accession>
<organism>
    <name type="scientific">Pseudomonas fluorescens (strain ATCC BAA-477 / NRRL B-23932 / Pf-5)</name>
    <dbReference type="NCBI Taxonomy" id="220664"/>
    <lineage>
        <taxon>Bacteria</taxon>
        <taxon>Pseudomonadati</taxon>
        <taxon>Pseudomonadota</taxon>
        <taxon>Gammaproteobacteria</taxon>
        <taxon>Pseudomonadales</taxon>
        <taxon>Pseudomonadaceae</taxon>
        <taxon>Pseudomonas</taxon>
    </lineage>
</organism>
<reference key="1">
    <citation type="journal article" date="2005" name="Nat. Biotechnol.">
        <title>Complete genome sequence of the plant commensal Pseudomonas fluorescens Pf-5.</title>
        <authorList>
            <person name="Paulsen I.T."/>
            <person name="Press C.M."/>
            <person name="Ravel J."/>
            <person name="Kobayashi D.Y."/>
            <person name="Myers G.S.A."/>
            <person name="Mavrodi D.V."/>
            <person name="DeBoy R.T."/>
            <person name="Seshadri R."/>
            <person name="Ren Q."/>
            <person name="Madupu R."/>
            <person name="Dodson R.J."/>
            <person name="Durkin A.S."/>
            <person name="Brinkac L.M."/>
            <person name="Daugherty S.C."/>
            <person name="Sullivan S.A."/>
            <person name="Rosovitz M.J."/>
            <person name="Gwinn M.L."/>
            <person name="Zhou L."/>
            <person name="Schneider D.J."/>
            <person name="Cartinhour S.W."/>
            <person name="Nelson W.C."/>
            <person name="Weidman J."/>
            <person name="Watkins K."/>
            <person name="Tran K."/>
            <person name="Khouri H."/>
            <person name="Pierson E.A."/>
            <person name="Pierson L.S. III"/>
            <person name="Thomashow L.S."/>
            <person name="Loper J.E."/>
        </authorList>
    </citation>
    <scope>NUCLEOTIDE SEQUENCE [LARGE SCALE GENOMIC DNA]</scope>
    <source>
        <strain>ATCC BAA-477 / NRRL B-23932 / Pf-5</strain>
    </source>
</reference>
<protein>
    <recommendedName>
        <fullName evidence="1">Ribonuclease PH</fullName>
        <shortName evidence="1">RNase PH</shortName>
        <ecNumber evidence="1">2.7.7.56</ecNumber>
    </recommendedName>
    <alternativeName>
        <fullName evidence="1">tRNA nucleotidyltransferase</fullName>
    </alternativeName>
</protein>
<sequence>MKRPSGRAADQLRSIRITRNYTKHAEGSVLVEFGDTKVICTVSVENGVPRFLKGQGQGWLTAEYGMLPRATGERNQREASRGKQGGRTLEIQRLIGRSLRAALDMSKLGDVTLYVDCDVIQADGGTRTASITGAMVALVDALKVIKKRGGLKGGDPLKQMIAAVSVGMYQGEPVLDLDYLEDSAAETDLNVVMTSTGGFIEVQGTAEGAPFQPAELNAMLALAQQGMNEIFQLQQAALAD</sequence>
<proteinExistence type="inferred from homology"/>
<feature type="chain" id="PRO_1000024849" description="Ribonuclease PH">
    <location>
        <begin position="1"/>
        <end position="240"/>
    </location>
</feature>
<feature type="binding site" evidence="1">
    <location>
        <position position="87"/>
    </location>
    <ligand>
        <name>phosphate</name>
        <dbReference type="ChEBI" id="CHEBI:43474"/>
        <note>substrate</note>
    </ligand>
</feature>
<feature type="binding site" evidence="1">
    <location>
        <begin position="125"/>
        <end position="127"/>
    </location>
    <ligand>
        <name>phosphate</name>
        <dbReference type="ChEBI" id="CHEBI:43474"/>
        <note>substrate</note>
    </ligand>
</feature>
<dbReference type="EC" id="2.7.7.56" evidence="1"/>
<dbReference type="EMBL" id="CP000076">
    <property type="protein sequence ID" value="AAY95247.1"/>
    <property type="molecule type" value="Genomic_DNA"/>
</dbReference>
<dbReference type="RefSeq" id="WP_011064229.1">
    <property type="nucleotide sequence ID" value="NC_004129.6"/>
</dbReference>
<dbReference type="SMR" id="Q4K3R6"/>
<dbReference type="STRING" id="220664.PFL_6059"/>
<dbReference type="GeneID" id="57479018"/>
<dbReference type="KEGG" id="pfl:PFL_6059"/>
<dbReference type="PATRIC" id="fig|220664.5.peg.6186"/>
<dbReference type="eggNOG" id="COG0689">
    <property type="taxonomic scope" value="Bacteria"/>
</dbReference>
<dbReference type="HOGENOM" id="CLU_050858_0_0_6"/>
<dbReference type="Proteomes" id="UP000008540">
    <property type="component" value="Chromosome"/>
</dbReference>
<dbReference type="GO" id="GO:0000175">
    <property type="term" value="F:3'-5'-RNA exonuclease activity"/>
    <property type="evidence" value="ECO:0007669"/>
    <property type="project" value="UniProtKB-UniRule"/>
</dbReference>
<dbReference type="GO" id="GO:0000049">
    <property type="term" value="F:tRNA binding"/>
    <property type="evidence" value="ECO:0007669"/>
    <property type="project" value="UniProtKB-UniRule"/>
</dbReference>
<dbReference type="GO" id="GO:0009022">
    <property type="term" value="F:tRNA nucleotidyltransferase activity"/>
    <property type="evidence" value="ECO:0007669"/>
    <property type="project" value="UniProtKB-UniRule"/>
</dbReference>
<dbReference type="GO" id="GO:0016075">
    <property type="term" value="P:rRNA catabolic process"/>
    <property type="evidence" value="ECO:0007669"/>
    <property type="project" value="UniProtKB-UniRule"/>
</dbReference>
<dbReference type="GO" id="GO:0006364">
    <property type="term" value="P:rRNA processing"/>
    <property type="evidence" value="ECO:0007669"/>
    <property type="project" value="UniProtKB-KW"/>
</dbReference>
<dbReference type="GO" id="GO:0008033">
    <property type="term" value="P:tRNA processing"/>
    <property type="evidence" value="ECO:0007669"/>
    <property type="project" value="UniProtKB-UniRule"/>
</dbReference>
<dbReference type="CDD" id="cd11362">
    <property type="entry name" value="RNase_PH_bact"/>
    <property type="match status" value="1"/>
</dbReference>
<dbReference type="FunFam" id="3.30.230.70:FF:000003">
    <property type="entry name" value="Ribonuclease PH"/>
    <property type="match status" value="1"/>
</dbReference>
<dbReference type="Gene3D" id="3.30.230.70">
    <property type="entry name" value="GHMP Kinase, N-terminal domain"/>
    <property type="match status" value="1"/>
</dbReference>
<dbReference type="HAMAP" id="MF_00564">
    <property type="entry name" value="RNase_PH"/>
    <property type="match status" value="1"/>
</dbReference>
<dbReference type="InterPro" id="IPR001247">
    <property type="entry name" value="ExoRNase_PH_dom1"/>
</dbReference>
<dbReference type="InterPro" id="IPR015847">
    <property type="entry name" value="ExoRNase_PH_dom2"/>
</dbReference>
<dbReference type="InterPro" id="IPR036345">
    <property type="entry name" value="ExoRNase_PH_dom2_sf"/>
</dbReference>
<dbReference type="InterPro" id="IPR027408">
    <property type="entry name" value="PNPase/RNase_PH_dom_sf"/>
</dbReference>
<dbReference type="InterPro" id="IPR020568">
    <property type="entry name" value="Ribosomal_Su5_D2-typ_SF"/>
</dbReference>
<dbReference type="InterPro" id="IPR050080">
    <property type="entry name" value="RNase_PH"/>
</dbReference>
<dbReference type="InterPro" id="IPR002381">
    <property type="entry name" value="RNase_PH_bac-type"/>
</dbReference>
<dbReference type="InterPro" id="IPR018336">
    <property type="entry name" value="RNase_PH_CS"/>
</dbReference>
<dbReference type="NCBIfam" id="TIGR01966">
    <property type="entry name" value="RNasePH"/>
    <property type="match status" value="1"/>
</dbReference>
<dbReference type="PANTHER" id="PTHR11953">
    <property type="entry name" value="EXOSOME COMPLEX COMPONENT"/>
    <property type="match status" value="1"/>
</dbReference>
<dbReference type="PANTHER" id="PTHR11953:SF0">
    <property type="entry name" value="EXOSOME COMPLEX COMPONENT RRP41"/>
    <property type="match status" value="1"/>
</dbReference>
<dbReference type="Pfam" id="PF01138">
    <property type="entry name" value="RNase_PH"/>
    <property type="match status" value="1"/>
</dbReference>
<dbReference type="Pfam" id="PF03725">
    <property type="entry name" value="RNase_PH_C"/>
    <property type="match status" value="1"/>
</dbReference>
<dbReference type="SUPFAM" id="SSF55666">
    <property type="entry name" value="Ribonuclease PH domain 2-like"/>
    <property type="match status" value="1"/>
</dbReference>
<dbReference type="SUPFAM" id="SSF54211">
    <property type="entry name" value="Ribosomal protein S5 domain 2-like"/>
    <property type="match status" value="1"/>
</dbReference>
<dbReference type="PROSITE" id="PS01277">
    <property type="entry name" value="RIBONUCLEASE_PH"/>
    <property type="match status" value="1"/>
</dbReference>
<gene>
    <name evidence="1" type="primary">rph</name>
    <name type="ordered locus">PFL_6059</name>
</gene>
<comment type="function">
    <text evidence="1">Phosphorolytic 3'-5' exoribonuclease that plays an important role in tRNA 3'-end maturation. Removes nucleotide residues following the 3'-CCA terminus of tRNAs; can also add nucleotides to the ends of RNA molecules by using nucleoside diphosphates as substrates, but this may not be physiologically important. Probably plays a role in initiation of 16S rRNA degradation (leading to ribosome degradation) during starvation.</text>
</comment>
<comment type="catalytic activity">
    <reaction evidence="1">
        <text>tRNA(n+1) + phosphate = tRNA(n) + a ribonucleoside 5'-diphosphate</text>
        <dbReference type="Rhea" id="RHEA:10628"/>
        <dbReference type="Rhea" id="RHEA-COMP:17343"/>
        <dbReference type="Rhea" id="RHEA-COMP:17344"/>
        <dbReference type="ChEBI" id="CHEBI:43474"/>
        <dbReference type="ChEBI" id="CHEBI:57930"/>
        <dbReference type="ChEBI" id="CHEBI:173114"/>
        <dbReference type="EC" id="2.7.7.56"/>
    </reaction>
</comment>
<comment type="subunit">
    <text evidence="1">Homohexameric ring arranged as a trimer of dimers.</text>
</comment>
<comment type="similarity">
    <text evidence="1">Belongs to the RNase PH family.</text>
</comment>
<name>RNPH_PSEF5</name>
<keyword id="KW-0548">Nucleotidyltransferase</keyword>
<keyword id="KW-0694">RNA-binding</keyword>
<keyword id="KW-0698">rRNA processing</keyword>
<keyword id="KW-0808">Transferase</keyword>
<keyword id="KW-0819">tRNA processing</keyword>
<keyword id="KW-0820">tRNA-binding</keyword>